<accession>Q0ST57</accession>
<protein>
    <recommendedName>
        <fullName evidence="1">Probable GTP-binding protein EngB</fullName>
    </recommendedName>
</protein>
<sequence>MKIKSSEFIISAVKREQYPDDNLPEIAFVGRSNVGKSSIINSLTNRRGLAKVSQTPGKTRLINFFLLNKDFYLVDLPGYGYAKVSKKEKASWGATIERYLLNRGPLKKVVLLVDCRHKPTADDVQMYEWIKHYGYEVVVIATKSDKISNNQIGKSEKLIKETLGLPKDYKLKFFSSLNKKGKDELVDYLFDDLVEEI</sequence>
<feature type="chain" id="PRO_0000266845" description="Probable GTP-binding protein EngB">
    <location>
        <begin position="1"/>
        <end position="197"/>
    </location>
</feature>
<feature type="domain" description="EngB-type G" evidence="1">
    <location>
        <begin position="22"/>
        <end position="195"/>
    </location>
</feature>
<feature type="binding site" evidence="1">
    <location>
        <begin position="30"/>
        <end position="37"/>
    </location>
    <ligand>
        <name>GTP</name>
        <dbReference type="ChEBI" id="CHEBI:37565"/>
    </ligand>
</feature>
<feature type="binding site" evidence="1">
    <location>
        <position position="37"/>
    </location>
    <ligand>
        <name>Mg(2+)</name>
        <dbReference type="ChEBI" id="CHEBI:18420"/>
    </ligand>
</feature>
<feature type="binding site" evidence="1">
    <location>
        <begin position="57"/>
        <end position="61"/>
    </location>
    <ligand>
        <name>GTP</name>
        <dbReference type="ChEBI" id="CHEBI:37565"/>
    </ligand>
</feature>
<feature type="binding site" evidence="1">
    <location>
        <position position="59"/>
    </location>
    <ligand>
        <name>Mg(2+)</name>
        <dbReference type="ChEBI" id="CHEBI:18420"/>
    </ligand>
</feature>
<feature type="binding site" evidence="1">
    <location>
        <begin position="75"/>
        <end position="78"/>
    </location>
    <ligand>
        <name>GTP</name>
        <dbReference type="ChEBI" id="CHEBI:37565"/>
    </ligand>
</feature>
<feature type="binding site" evidence="1">
    <location>
        <begin position="142"/>
        <end position="145"/>
    </location>
    <ligand>
        <name>GTP</name>
        <dbReference type="ChEBI" id="CHEBI:37565"/>
    </ligand>
</feature>
<feature type="binding site" evidence="1">
    <location>
        <begin position="174"/>
        <end position="176"/>
    </location>
    <ligand>
        <name>GTP</name>
        <dbReference type="ChEBI" id="CHEBI:37565"/>
    </ligand>
</feature>
<keyword id="KW-0131">Cell cycle</keyword>
<keyword id="KW-0132">Cell division</keyword>
<keyword id="KW-0342">GTP-binding</keyword>
<keyword id="KW-0460">Magnesium</keyword>
<keyword id="KW-0479">Metal-binding</keyword>
<keyword id="KW-0547">Nucleotide-binding</keyword>
<keyword id="KW-0717">Septation</keyword>
<organism>
    <name type="scientific">Clostridium perfringens (strain SM101 / Type A)</name>
    <dbReference type="NCBI Taxonomy" id="289380"/>
    <lineage>
        <taxon>Bacteria</taxon>
        <taxon>Bacillati</taxon>
        <taxon>Bacillota</taxon>
        <taxon>Clostridia</taxon>
        <taxon>Eubacteriales</taxon>
        <taxon>Clostridiaceae</taxon>
        <taxon>Clostridium</taxon>
    </lineage>
</organism>
<comment type="function">
    <text evidence="1">Necessary for normal cell division and for the maintenance of normal septation.</text>
</comment>
<comment type="cofactor">
    <cofactor evidence="1">
        <name>Mg(2+)</name>
        <dbReference type="ChEBI" id="CHEBI:18420"/>
    </cofactor>
</comment>
<comment type="similarity">
    <text evidence="1">Belongs to the TRAFAC class TrmE-Era-EngA-EngB-Septin-like GTPase superfamily. EngB GTPase family.</text>
</comment>
<dbReference type="EMBL" id="CP000312">
    <property type="protein sequence ID" value="ABG86004.1"/>
    <property type="molecule type" value="Genomic_DNA"/>
</dbReference>
<dbReference type="RefSeq" id="WP_011592354.1">
    <property type="nucleotide sequence ID" value="NC_008262.1"/>
</dbReference>
<dbReference type="SMR" id="Q0ST57"/>
<dbReference type="KEGG" id="cpr:CPR_1381"/>
<dbReference type="Proteomes" id="UP000001824">
    <property type="component" value="Chromosome"/>
</dbReference>
<dbReference type="GO" id="GO:0005829">
    <property type="term" value="C:cytosol"/>
    <property type="evidence" value="ECO:0007669"/>
    <property type="project" value="TreeGrafter"/>
</dbReference>
<dbReference type="GO" id="GO:0005525">
    <property type="term" value="F:GTP binding"/>
    <property type="evidence" value="ECO:0007669"/>
    <property type="project" value="UniProtKB-UniRule"/>
</dbReference>
<dbReference type="GO" id="GO:0046872">
    <property type="term" value="F:metal ion binding"/>
    <property type="evidence" value="ECO:0007669"/>
    <property type="project" value="UniProtKB-KW"/>
</dbReference>
<dbReference type="GO" id="GO:0000917">
    <property type="term" value="P:division septum assembly"/>
    <property type="evidence" value="ECO:0007669"/>
    <property type="project" value="UniProtKB-KW"/>
</dbReference>
<dbReference type="CDD" id="cd01876">
    <property type="entry name" value="YihA_EngB"/>
    <property type="match status" value="1"/>
</dbReference>
<dbReference type="FunFam" id="3.40.50.300:FF:000098">
    <property type="entry name" value="Probable GTP-binding protein EngB"/>
    <property type="match status" value="1"/>
</dbReference>
<dbReference type="Gene3D" id="3.40.50.300">
    <property type="entry name" value="P-loop containing nucleotide triphosphate hydrolases"/>
    <property type="match status" value="1"/>
</dbReference>
<dbReference type="HAMAP" id="MF_00321">
    <property type="entry name" value="GTPase_EngB"/>
    <property type="match status" value="1"/>
</dbReference>
<dbReference type="InterPro" id="IPR030393">
    <property type="entry name" value="G_ENGB_dom"/>
</dbReference>
<dbReference type="InterPro" id="IPR006073">
    <property type="entry name" value="GTP-bd"/>
</dbReference>
<dbReference type="InterPro" id="IPR019987">
    <property type="entry name" value="GTP-bd_ribosome_bio_YsxC"/>
</dbReference>
<dbReference type="InterPro" id="IPR027417">
    <property type="entry name" value="P-loop_NTPase"/>
</dbReference>
<dbReference type="NCBIfam" id="TIGR03598">
    <property type="entry name" value="GTPase_YsxC"/>
    <property type="match status" value="1"/>
</dbReference>
<dbReference type="PANTHER" id="PTHR11649:SF13">
    <property type="entry name" value="ENGB-TYPE G DOMAIN-CONTAINING PROTEIN"/>
    <property type="match status" value="1"/>
</dbReference>
<dbReference type="PANTHER" id="PTHR11649">
    <property type="entry name" value="MSS1/TRME-RELATED GTP-BINDING PROTEIN"/>
    <property type="match status" value="1"/>
</dbReference>
<dbReference type="Pfam" id="PF01926">
    <property type="entry name" value="MMR_HSR1"/>
    <property type="match status" value="1"/>
</dbReference>
<dbReference type="SUPFAM" id="SSF52540">
    <property type="entry name" value="P-loop containing nucleoside triphosphate hydrolases"/>
    <property type="match status" value="1"/>
</dbReference>
<dbReference type="PROSITE" id="PS51706">
    <property type="entry name" value="G_ENGB"/>
    <property type="match status" value="1"/>
</dbReference>
<name>ENGB_CLOPS</name>
<reference key="1">
    <citation type="journal article" date="2006" name="Genome Res.">
        <title>Skewed genomic variability in strains of the toxigenic bacterial pathogen, Clostridium perfringens.</title>
        <authorList>
            <person name="Myers G.S.A."/>
            <person name="Rasko D.A."/>
            <person name="Cheung J.K."/>
            <person name="Ravel J."/>
            <person name="Seshadri R."/>
            <person name="DeBoy R.T."/>
            <person name="Ren Q."/>
            <person name="Varga J."/>
            <person name="Awad M.M."/>
            <person name="Brinkac L.M."/>
            <person name="Daugherty S.C."/>
            <person name="Haft D.H."/>
            <person name="Dodson R.J."/>
            <person name="Madupu R."/>
            <person name="Nelson W.C."/>
            <person name="Rosovitz M.J."/>
            <person name="Sullivan S.A."/>
            <person name="Khouri H."/>
            <person name="Dimitrov G.I."/>
            <person name="Watkins K.L."/>
            <person name="Mulligan S."/>
            <person name="Benton J."/>
            <person name="Radune D."/>
            <person name="Fisher D.J."/>
            <person name="Atkins H.S."/>
            <person name="Hiscox T."/>
            <person name="Jost B.H."/>
            <person name="Billington S.J."/>
            <person name="Songer J.G."/>
            <person name="McClane B.A."/>
            <person name="Titball R.W."/>
            <person name="Rood J.I."/>
            <person name="Melville S.B."/>
            <person name="Paulsen I.T."/>
        </authorList>
    </citation>
    <scope>NUCLEOTIDE SEQUENCE [LARGE SCALE GENOMIC DNA]</scope>
    <source>
        <strain>SM101 / Type A</strain>
    </source>
</reference>
<evidence type="ECO:0000255" key="1">
    <source>
        <dbReference type="HAMAP-Rule" id="MF_00321"/>
    </source>
</evidence>
<gene>
    <name evidence="1" type="primary">engB</name>
    <name type="ordered locus">CPR_1381</name>
</gene>
<proteinExistence type="inferred from homology"/>